<protein>
    <recommendedName>
        <fullName evidence="1">Glutamate 5-kinase</fullName>
        <ecNumber evidence="1">2.7.2.11</ecNumber>
    </recommendedName>
    <alternativeName>
        <fullName evidence="1">Gamma-glutamyl kinase</fullName>
        <shortName evidence="1">GK</shortName>
    </alternativeName>
</protein>
<gene>
    <name evidence="1" type="primary">proB</name>
    <name type="ordered locus">OEOE_0947</name>
</gene>
<evidence type="ECO:0000255" key="1">
    <source>
        <dbReference type="HAMAP-Rule" id="MF_00456"/>
    </source>
</evidence>
<sequence length="268" mass="29556">MAEKSFDNWKKIVVKVGTSTIVQENSQINLPIIGQLVQTLCALRNQNREVVFVTSGAVGVAINQLGFKERPNEIPRQQALAAIGQADLMAIYNQNFSFYHQITGQILLTYDVFDNPKMLENMLNALRELLKMKAIPIINENDVIAVDEMDHQHSFGDNDCLAAMVTKIIDADGLIILSDVDALYDRNPHEFANAKAIKRVGSITKQVINLASGKSNLGKGGMLTKLKAAKYLLKNDKQMLLLPGSEPDGILKALSGQEIGTLFANEYK</sequence>
<organism>
    <name type="scientific">Oenococcus oeni (strain ATCC BAA-331 / PSU-1)</name>
    <dbReference type="NCBI Taxonomy" id="203123"/>
    <lineage>
        <taxon>Bacteria</taxon>
        <taxon>Bacillati</taxon>
        <taxon>Bacillota</taxon>
        <taxon>Bacilli</taxon>
        <taxon>Lactobacillales</taxon>
        <taxon>Lactobacillaceae</taxon>
        <taxon>Oenococcus</taxon>
    </lineage>
</organism>
<feature type="chain" id="PRO_1000081083" description="Glutamate 5-kinase">
    <location>
        <begin position="1"/>
        <end position="268"/>
    </location>
</feature>
<feature type="binding site" evidence="1">
    <location>
        <position position="15"/>
    </location>
    <ligand>
        <name>ATP</name>
        <dbReference type="ChEBI" id="CHEBI:30616"/>
    </ligand>
</feature>
<feature type="binding site" evidence="1">
    <location>
        <position position="55"/>
    </location>
    <ligand>
        <name>substrate</name>
    </ligand>
</feature>
<feature type="binding site" evidence="1">
    <location>
        <position position="142"/>
    </location>
    <ligand>
        <name>substrate</name>
    </ligand>
</feature>
<feature type="binding site" evidence="1">
    <location>
        <position position="158"/>
    </location>
    <ligand>
        <name>substrate</name>
    </ligand>
</feature>
<feature type="binding site" evidence="1">
    <location>
        <begin position="178"/>
        <end position="179"/>
    </location>
    <ligand>
        <name>ATP</name>
        <dbReference type="ChEBI" id="CHEBI:30616"/>
    </ligand>
</feature>
<accession>Q04FB3</accession>
<proteinExistence type="inferred from homology"/>
<reference key="1">
    <citation type="journal article" date="2006" name="Proc. Natl. Acad. Sci. U.S.A.">
        <title>Comparative genomics of the lactic acid bacteria.</title>
        <authorList>
            <person name="Makarova K.S."/>
            <person name="Slesarev A."/>
            <person name="Wolf Y.I."/>
            <person name="Sorokin A."/>
            <person name="Mirkin B."/>
            <person name="Koonin E.V."/>
            <person name="Pavlov A."/>
            <person name="Pavlova N."/>
            <person name="Karamychev V."/>
            <person name="Polouchine N."/>
            <person name="Shakhova V."/>
            <person name="Grigoriev I."/>
            <person name="Lou Y."/>
            <person name="Rohksar D."/>
            <person name="Lucas S."/>
            <person name="Huang K."/>
            <person name="Goodstein D.M."/>
            <person name="Hawkins T."/>
            <person name="Plengvidhya V."/>
            <person name="Welker D."/>
            <person name="Hughes J."/>
            <person name="Goh Y."/>
            <person name="Benson A."/>
            <person name="Baldwin K."/>
            <person name="Lee J.-H."/>
            <person name="Diaz-Muniz I."/>
            <person name="Dosti B."/>
            <person name="Smeianov V."/>
            <person name="Wechter W."/>
            <person name="Barabote R."/>
            <person name="Lorca G."/>
            <person name="Altermann E."/>
            <person name="Barrangou R."/>
            <person name="Ganesan B."/>
            <person name="Xie Y."/>
            <person name="Rawsthorne H."/>
            <person name="Tamir D."/>
            <person name="Parker C."/>
            <person name="Breidt F."/>
            <person name="Broadbent J.R."/>
            <person name="Hutkins R."/>
            <person name="O'Sullivan D."/>
            <person name="Steele J."/>
            <person name="Unlu G."/>
            <person name="Saier M.H. Jr."/>
            <person name="Klaenhammer T."/>
            <person name="Richardson P."/>
            <person name="Kozyavkin S."/>
            <person name="Weimer B.C."/>
            <person name="Mills D.A."/>
        </authorList>
    </citation>
    <scope>NUCLEOTIDE SEQUENCE [LARGE SCALE GENOMIC DNA]</scope>
    <source>
        <strain>ATCC BAA-331 / PSU-1</strain>
    </source>
</reference>
<dbReference type="EC" id="2.7.2.11" evidence="1"/>
<dbReference type="EMBL" id="CP000411">
    <property type="protein sequence ID" value="ABJ56859.1"/>
    <property type="molecule type" value="Genomic_DNA"/>
</dbReference>
<dbReference type="RefSeq" id="WP_011677585.1">
    <property type="nucleotide sequence ID" value="NC_008528.1"/>
</dbReference>
<dbReference type="SMR" id="Q04FB3"/>
<dbReference type="STRING" id="203123.OEOE_0947"/>
<dbReference type="KEGG" id="ooe:OEOE_0947"/>
<dbReference type="PATRIC" id="fig|203123.7.peg.961"/>
<dbReference type="eggNOG" id="COG0263">
    <property type="taxonomic scope" value="Bacteria"/>
</dbReference>
<dbReference type="HOGENOM" id="CLU_025400_0_2_9"/>
<dbReference type="UniPathway" id="UPA00098">
    <property type="reaction ID" value="UER00359"/>
</dbReference>
<dbReference type="Proteomes" id="UP000000774">
    <property type="component" value="Chromosome"/>
</dbReference>
<dbReference type="GO" id="GO:0005829">
    <property type="term" value="C:cytosol"/>
    <property type="evidence" value="ECO:0007669"/>
    <property type="project" value="TreeGrafter"/>
</dbReference>
<dbReference type="GO" id="GO:0005524">
    <property type="term" value="F:ATP binding"/>
    <property type="evidence" value="ECO:0007669"/>
    <property type="project" value="UniProtKB-KW"/>
</dbReference>
<dbReference type="GO" id="GO:0004349">
    <property type="term" value="F:glutamate 5-kinase activity"/>
    <property type="evidence" value="ECO:0007669"/>
    <property type="project" value="UniProtKB-UniRule"/>
</dbReference>
<dbReference type="GO" id="GO:0055129">
    <property type="term" value="P:L-proline biosynthetic process"/>
    <property type="evidence" value="ECO:0007669"/>
    <property type="project" value="UniProtKB-UniRule"/>
</dbReference>
<dbReference type="CDD" id="cd04242">
    <property type="entry name" value="AAK_G5K_ProB"/>
    <property type="match status" value="1"/>
</dbReference>
<dbReference type="FunFam" id="3.40.1160.10:FF:000006">
    <property type="entry name" value="Glutamate 5-kinase"/>
    <property type="match status" value="1"/>
</dbReference>
<dbReference type="Gene3D" id="3.40.1160.10">
    <property type="entry name" value="Acetylglutamate kinase-like"/>
    <property type="match status" value="1"/>
</dbReference>
<dbReference type="HAMAP" id="MF_00456">
    <property type="entry name" value="ProB"/>
    <property type="match status" value="1"/>
</dbReference>
<dbReference type="InterPro" id="IPR036393">
    <property type="entry name" value="AceGlu_kinase-like_sf"/>
</dbReference>
<dbReference type="InterPro" id="IPR001048">
    <property type="entry name" value="Asp/Glu/Uridylate_kinase"/>
</dbReference>
<dbReference type="InterPro" id="IPR041739">
    <property type="entry name" value="G5K_ProB"/>
</dbReference>
<dbReference type="InterPro" id="IPR001057">
    <property type="entry name" value="Glu/AcGlu_kinase"/>
</dbReference>
<dbReference type="InterPro" id="IPR011529">
    <property type="entry name" value="Glu_5kinase"/>
</dbReference>
<dbReference type="InterPro" id="IPR005715">
    <property type="entry name" value="Glu_5kinase/COase_Synthase"/>
</dbReference>
<dbReference type="InterPro" id="IPR019797">
    <property type="entry name" value="Glutamate_5-kinase_CS"/>
</dbReference>
<dbReference type="NCBIfam" id="TIGR01027">
    <property type="entry name" value="proB"/>
    <property type="match status" value="1"/>
</dbReference>
<dbReference type="PANTHER" id="PTHR43654">
    <property type="entry name" value="GLUTAMATE 5-KINASE"/>
    <property type="match status" value="1"/>
</dbReference>
<dbReference type="PANTHER" id="PTHR43654:SF1">
    <property type="entry name" value="ISOPENTENYL PHOSPHATE KINASE"/>
    <property type="match status" value="1"/>
</dbReference>
<dbReference type="Pfam" id="PF00696">
    <property type="entry name" value="AA_kinase"/>
    <property type="match status" value="1"/>
</dbReference>
<dbReference type="PIRSF" id="PIRSF000729">
    <property type="entry name" value="GK"/>
    <property type="match status" value="1"/>
</dbReference>
<dbReference type="PRINTS" id="PR00474">
    <property type="entry name" value="GLU5KINASE"/>
</dbReference>
<dbReference type="SUPFAM" id="SSF53633">
    <property type="entry name" value="Carbamate kinase-like"/>
    <property type="match status" value="1"/>
</dbReference>
<dbReference type="PROSITE" id="PS00902">
    <property type="entry name" value="GLUTAMATE_5_KINASE"/>
    <property type="match status" value="1"/>
</dbReference>
<comment type="function">
    <text evidence="1">Catalyzes the transfer of a phosphate group to glutamate to form L-glutamate 5-phosphate.</text>
</comment>
<comment type="catalytic activity">
    <reaction evidence="1">
        <text>L-glutamate + ATP = L-glutamyl 5-phosphate + ADP</text>
        <dbReference type="Rhea" id="RHEA:14877"/>
        <dbReference type="ChEBI" id="CHEBI:29985"/>
        <dbReference type="ChEBI" id="CHEBI:30616"/>
        <dbReference type="ChEBI" id="CHEBI:58274"/>
        <dbReference type="ChEBI" id="CHEBI:456216"/>
        <dbReference type="EC" id="2.7.2.11"/>
    </reaction>
</comment>
<comment type="pathway">
    <text evidence="1">Amino-acid biosynthesis; L-proline biosynthesis; L-glutamate 5-semialdehyde from L-glutamate: step 1/2.</text>
</comment>
<comment type="subcellular location">
    <subcellularLocation>
        <location evidence="1">Cytoplasm</location>
    </subcellularLocation>
</comment>
<comment type="similarity">
    <text evidence="1">Belongs to the glutamate 5-kinase family.</text>
</comment>
<keyword id="KW-0028">Amino-acid biosynthesis</keyword>
<keyword id="KW-0067">ATP-binding</keyword>
<keyword id="KW-0963">Cytoplasm</keyword>
<keyword id="KW-0418">Kinase</keyword>
<keyword id="KW-0547">Nucleotide-binding</keyword>
<keyword id="KW-0641">Proline biosynthesis</keyword>
<keyword id="KW-1185">Reference proteome</keyword>
<keyword id="KW-0808">Transferase</keyword>
<name>PROB_OENOB</name>